<dbReference type="GO" id="GO:0005576">
    <property type="term" value="C:extracellular region"/>
    <property type="evidence" value="ECO:0007669"/>
    <property type="project" value="UniProtKB-SubCell"/>
</dbReference>
<dbReference type="GO" id="GO:0007218">
    <property type="term" value="P:neuropeptide signaling pathway"/>
    <property type="evidence" value="ECO:0007669"/>
    <property type="project" value="UniProtKB-KW"/>
</dbReference>
<protein>
    <recommendedName>
        <fullName>Carcinustatin-20</fullName>
    </recommendedName>
</protein>
<evidence type="ECO:0000269" key="1">
    <source>
    </source>
</evidence>
<evidence type="ECO:0000305" key="2"/>
<feature type="peptide" id="PRO_0000043475" description="Carcinustatin-20">
    <location>
        <begin position="1"/>
        <end position="27"/>
    </location>
</feature>
<feature type="modified residue" description="Leucine amide" evidence="1">
    <location>
        <position position="27"/>
    </location>
</feature>
<proteinExistence type="evidence at protein level"/>
<comment type="function">
    <text>May act as a neurotransmitter or neuromodulator.</text>
</comment>
<comment type="subcellular location">
    <subcellularLocation>
        <location>Secreted</location>
    </subcellularLocation>
</comment>
<comment type="similarity">
    <text evidence="2">Belongs to the allatostatin family.</text>
</comment>
<reference key="1">
    <citation type="journal article" date="1997" name="Eur. J. Biochem.">
        <title>Isolation and identification of multiple neuropeptides of the allatostatin superfamily in the shore crab Carcinus maenas.</title>
        <authorList>
            <person name="Duve H."/>
            <person name="Johnsen A.H."/>
            <person name="Maestro J.-L."/>
            <person name="Scott A.G."/>
            <person name="Jaros P.P."/>
            <person name="Thorpe A."/>
        </authorList>
    </citation>
    <scope>PROTEIN SEQUENCE</scope>
    <scope>AMIDATION AT LEU-27</scope>
    <source>
        <tissue>Cerebral ganglion</tissue>
        <tissue>Thoracic ganglion</tissue>
    </source>
</reference>
<organism>
    <name type="scientific">Carcinus maenas</name>
    <name type="common">Common shore crab</name>
    <name type="synonym">Green crab</name>
    <dbReference type="NCBI Taxonomy" id="6759"/>
    <lineage>
        <taxon>Eukaryota</taxon>
        <taxon>Metazoa</taxon>
        <taxon>Ecdysozoa</taxon>
        <taxon>Arthropoda</taxon>
        <taxon>Crustacea</taxon>
        <taxon>Multicrustacea</taxon>
        <taxon>Malacostraca</taxon>
        <taxon>Eumalacostraca</taxon>
        <taxon>Eucarida</taxon>
        <taxon>Decapoda</taxon>
        <taxon>Pleocyemata</taxon>
        <taxon>Brachyura</taxon>
        <taxon>Eubrachyura</taxon>
        <taxon>Portunoidea</taxon>
        <taxon>Carcinidae</taxon>
        <taxon>Carcinus</taxon>
    </lineage>
</organism>
<keyword id="KW-0027">Amidation</keyword>
<keyword id="KW-0903">Direct protein sequencing</keyword>
<keyword id="KW-0527">Neuropeptide</keyword>
<keyword id="KW-0964">Secreted</keyword>
<sequence length="27" mass="3152">GYEDEDEDRPFYALGLGKRPRTYSFGL</sequence>
<name>ALL20_CARMA</name>
<accession>P81823</accession>